<reference key="1">
    <citation type="submission" date="2008-02" db="EMBL/GenBank/DDBJ databases">
        <title>Complete sequence of Haemophilus somnus 2336.</title>
        <authorList>
            <consortium name="US DOE Joint Genome Institute"/>
            <person name="Siddaramappa S."/>
            <person name="Duncan A.J."/>
            <person name="Challacombe J.F."/>
            <person name="Rainey D."/>
            <person name="Gillaspy A.F."/>
            <person name="Carson M."/>
            <person name="Gipson J."/>
            <person name="Gipson M."/>
            <person name="Bruce D."/>
            <person name="Detter J.C."/>
            <person name="Han C.S."/>
            <person name="Land M."/>
            <person name="Tapia R."/>
            <person name="Thompson L.S."/>
            <person name="Orvis J."/>
            <person name="Zaitshik J."/>
            <person name="Barnes G."/>
            <person name="Brettin T.S."/>
            <person name="Dyer D.W."/>
            <person name="Inzana T.J."/>
        </authorList>
    </citation>
    <scope>NUCLEOTIDE SEQUENCE [LARGE SCALE GENOMIC DNA]</scope>
    <source>
        <strain>2336</strain>
    </source>
</reference>
<gene>
    <name evidence="1" type="primary">tolB</name>
    <name type="ordered locus">HSM_0135</name>
</gene>
<keyword id="KW-0131">Cell cycle</keyword>
<keyword id="KW-0132">Cell division</keyword>
<keyword id="KW-0574">Periplasm</keyword>
<keyword id="KW-0732">Signal</keyword>
<sequence>MKFSAYLTTLFIVLFSLFIQTVQAESEVRIVIDEGVDSARPIAIIPFKWNGSDSMPIDVADIISADLRNSGKFNPIAVSKMPQKPTSASEVISDVWSSLGIDAVVVGQVTPNEKGYSIAYQLVDTIGASGNSGEVLSQNQYAVPKNAIRLGAHTISDEVFEKLTAIRGAFRTKIAYVVQKNGGSKPYQVRIADYDGHNQFIVYSSSQPLMSPAWSPDGSKLAYVSFENRKSQLIVHDLQSGARRVIAAFPGHNGAPAFSPDGSKIAFASSKDGVLNIYVMNLGNGTISQLTSGAGNNTEPSWSPDGQSIIFTSDRAGGPQIYQMDVVGNGVSLVSAGRGYSGKISADGSILVMIYGDNIVKKDLATGVTEMLSSTFLDESPSISPNGIMIIYSSTQGLGKVLQLVSADGRFKARLPSSDGQIKFPAWSPYLNKN</sequence>
<dbReference type="EMBL" id="CP000947">
    <property type="protein sequence ID" value="ACA31085.1"/>
    <property type="molecule type" value="Genomic_DNA"/>
</dbReference>
<dbReference type="RefSeq" id="WP_012340504.1">
    <property type="nucleotide sequence ID" value="NC_010519.1"/>
</dbReference>
<dbReference type="SMR" id="B0UVJ6"/>
<dbReference type="STRING" id="228400.HSM_0135"/>
<dbReference type="GeneID" id="31486410"/>
<dbReference type="KEGG" id="hsm:HSM_0135"/>
<dbReference type="HOGENOM" id="CLU_047123_0_0_6"/>
<dbReference type="GO" id="GO:0042597">
    <property type="term" value="C:periplasmic space"/>
    <property type="evidence" value="ECO:0007669"/>
    <property type="project" value="UniProtKB-SubCell"/>
</dbReference>
<dbReference type="GO" id="GO:0051301">
    <property type="term" value="P:cell division"/>
    <property type="evidence" value="ECO:0007669"/>
    <property type="project" value="UniProtKB-UniRule"/>
</dbReference>
<dbReference type="GO" id="GO:0017038">
    <property type="term" value="P:protein import"/>
    <property type="evidence" value="ECO:0007669"/>
    <property type="project" value="InterPro"/>
</dbReference>
<dbReference type="Gene3D" id="2.120.10.30">
    <property type="entry name" value="TolB, C-terminal domain"/>
    <property type="match status" value="1"/>
</dbReference>
<dbReference type="Gene3D" id="3.40.50.10070">
    <property type="entry name" value="TolB, N-terminal domain"/>
    <property type="match status" value="1"/>
</dbReference>
<dbReference type="HAMAP" id="MF_00671">
    <property type="entry name" value="TolB"/>
    <property type="match status" value="1"/>
</dbReference>
<dbReference type="InterPro" id="IPR011042">
    <property type="entry name" value="6-blade_b-propeller_TolB-like"/>
</dbReference>
<dbReference type="InterPro" id="IPR011659">
    <property type="entry name" value="PD40"/>
</dbReference>
<dbReference type="InterPro" id="IPR014167">
    <property type="entry name" value="Tol-Pal_TolB"/>
</dbReference>
<dbReference type="InterPro" id="IPR007195">
    <property type="entry name" value="TolB_N"/>
</dbReference>
<dbReference type="NCBIfam" id="TIGR02800">
    <property type="entry name" value="propeller_TolB"/>
    <property type="match status" value="1"/>
</dbReference>
<dbReference type="PANTHER" id="PTHR36842:SF1">
    <property type="entry name" value="PROTEIN TOLB"/>
    <property type="match status" value="1"/>
</dbReference>
<dbReference type="PANTHER" id="PTHR36842">
    <property type="entry name" value="PROTEIN TOLB HOMOLOG"/>
    <property type="match status" value="1"/>
</dbReference>
<dbReference type="Pfam" id="PF07676">
    <property type="entry name" value="PD40"/>
    <property type="match status" value="4"/>
</dbReference>
<dbReference type="Pfam" id="PF04052">
    <property type="entry name" value="TolB_N"/>
    <property type="match status" value="1"/>
</dbReference>
<dbReference type="SUPFAM" id="SSF52964">
    <property type="entry name" value="TolB, N-terminal domain"/>
    <property type="match status" value="1"/>
</dbReference>
<dbReference type="SUPFAM" id="SSF69304">
    <property type="entry name" value="Tricorn protease N-terminal domain"/>
    <property type="match status" value="1"/>
</dbReference>
<evidence type="ECO:0000255" key="1">
    <source>
        <dbReference type="HAMAP-Rule" id="MF_00671"/>
    </source>
</evidence>
<protein>
    <recommendedName>
        <fullName evidence="1">Tol-Pal system protein TolB</fullName>
    </recommendedName>
</protein>
<accession>B0UVJ6</accession>
<name>TOLB_HISS2</name>
<feature type="signal peptide" evidence="1">
    <location>
        <begin position="1"/>
        <end position="24"/>
    </location>
</feature>
<feature type="chain" id="PRO_5000311140" description="Tol-Pal system protein TolB" evidence="1">
    <location>
        <begin position="25"/>
        <end position="434"/>
    </location>
</feature>
<proteinExistence type="inferred from homology"/>
<comment type="function">
    <text evidence="1">Part of the Tol-Pal system, which plays a role in outer membrane invagination during cell division and is important for maintaining outer membrane integrity.</text>
</comment>
<comment type="subunit">
    <text evidence="1">The Tol-Pal system is composed of five core proteins: the inner membrane proteins TolA, TolQ and TolR, the periplasmic protein TolB and the outer membrane protein Pal. They form a network linking the inner and outer membranes and the peptidoglycan layer.</text>
</comment>
<comment type="subcellular location">
    <subcellularLocation>
        <location evidence="1">Periplasm</location>
    </subcellularLocation>
</comment>
<comment type="similarity">
    <text evidence="1">Belongs to the TolB family.</text>
</comment>
<organism>
    <name type="scientific">Histophilus somni (strain 2336)</name>
    <name type="common">Haemophilus somnus</name>
    <dbReference type="NCBI Taxonomy" id="228400"/>
    <lineage>
        <taxon>Bacteria</taxon>
        <taxon>Pseudomonadati</taxon>
        <taxon>Pseudomonadota</taxon>
        <taxon>Gammaproteobacteria</taxon>
        <taxon>Pasteurellales</taxon>
        <taxon>Pasteurellaceae</taxon>
        <taxon>Histophilus</taxon>
    </lineage>
</organism>